<evidence type="ECO:0000255" key="1">
    <source>
        <dbReference type="HAMAP-Rule" id="MF_00012"/>
    </source>
</evidence>
<name>ILVD_STAEQ</name>
<protein>
    <recommendedName>
        <fullName evidence="1">Dihydroxy-acid dehydratase</fullName>
        <shortName evidence="1">DAD</shortName>
        <ecNumber evidence="1">4.2.1.9</ecNumber>
    </recommendedName>
</protein>
<comment type="function">
    <text evidence="1">Functions in the biosynthesis of branched-chain amino acids. Catalyzes the dehydration of (2R,3R)-2,3-dihydroxy-3-methylpentanoate (2,3-dihydroxy-3-methylvalerate) into 2-oxo-3-methylpentanoate (2-oxo-3-methylvalerate) and of (2R)-2,3-dihydroxy-3-methylbutanoate (2,3-dihydroxyisovalerate) into 2-oxo-3-methylbutanoate (2-oxoisovalerate), the penultimate precursor to L-isoleucine and L-valine, respectively.</text>
</comment>
<comment type="catalytic activity">
    <reaction evidence="1">
        <text>(2R)-2,3-dihydroxy-3-methylbutanoate = 3-methyl-2-oxobutanoate + H2O</text>
        <dbReference type="Rhea" id="RHEA:24809"/>
        <dbReference type="ChEBI" id="CHEBI:11851"/>
        <dbReference type="ChEBI" id="CHEBI:15377"/>
        <dbReference type="ChEBI" id="CHEBI:49072"/>
        <dbReference type="EC" id="4.2.1.9"/>
    </reaction>
    <physiologicalReaction direction="left-to-right" evidence="1">
        <dbReference type="Rhea" id="RHEA:24810"/>
    </physiologicalReaction>
</comment>
<comment type="catalytic activity">
    <reaction evidence="1">
        <text>(2R,3R)-2,3-dihydroxy-3-methylpentanoate = (S)-3-methyl-2-oxopentanoate + H2O</text>
        <dbReference type="Rhea" id="RHEA:27694"/>
        <dbReference type="ChEBI" id="CHEBI:15377"/>
        <dbReference type="ChEBI" id="CHEBI:35146"/>
        <dbReference type="ChEBI" id="CHEBI:49258"/>
        <dbReference type="EC" id="4.2.1.9"/>
    </reaction>
    <physiologicalReaction direction="left-to-right" evidence="1">
        <dbReference type="Rhea" id="RHEA:27695"/>
    </physiologicalReaction>
</comment>
<comment type="cofactor">
    <cofactor evidence="1">
        <name>[2Fe-2S] cluster</name>
        <dbReference type="ChEBI" id="CHEBI:190135"/>
    </cofactor>
    <text evidence="1">Binds 1 [2Fe-2S] cluster per subunit. This cluster acts as a Lewis acid cofactor.</text>
</comment>
<comment type="cofactor">
    <cofactor evidence="1">
        <name>Mg(2+)</name>
        <dbReference type="ChEBI" id="CHEBI:18420"/>
    </cofactor>
</comment>
<comment type="pathway">
    <text evidence="1">Amino-acid biosynthesis; L-isoleucine biosynthesis; L-isoleucine from 2-oxobutanoate: step 3/4.</text>
</comment>
<comment type="pathway">
    <text evidence="1">Amino-acid biosynthesis; L-valine biosynthesis; L-valine from pyruvate: step 3/4.</text>
</comment>
<comment type="subunit">
    <text evidence="1">Homodimer.</text>
</comment>
<comment type="similarity">
    <text evidence="1">Belongs to the IlvD/Edd family.</text>
</comment>
<feature type="chain" id="PRO_0000103512" description="Dihydroxy-acid dehydratase">
    <location>
        <begin position="1"/>
        <end position="562"/>
    </location>
</feature>
<feature type="active site" description="Proton acceptor" evidence="1">
    <location>
        <position position="472"/>
    </location>
</feature>
<feature type="binding site" evidence="1">
    <location>
        <position position="80"/>
    </location>
    <ligand>
        <name>Mg(2+)</name>
        <dbReference type="ChEBI" id="CHEBI:18420"/>
    </ligand>
</feature>
<feature type="binding site" evidence="1">
    <location>
        <position position="121"/>
    </location>
    <ligand>
        <name>[2Fe-2S] cluster</name>
        <dbReference type="ChEBI" id="CHEBI:190135"/>
    </ligand>
</feature>
<feature type="binding site" evidence="1">
    <location>
        <position position="122"/>
    </location>
    <ligand>
        <name>Mg(2+)</name>
        <dbReference type="ChEBI" id="CHEBI:18420"/>
    </ligand>
</feature>
<feature type="binding site" description="via carbamate group" evidence="1">
    <location>
        <position position="123"/>
    </location>
    <ligand>
        <name>Mg(2+)</name>
        <dbReference type="ChEBI" id="CHEBI:18420"/>
    </ligand>
</feature>
<feature type="binding site" evidence="1">
    <location>
        <position position="194"/>
    </location>
    <ligand>
        <name>[2Fe-2S] cluster</name>
        <dbReference type="ChEBI" id="CHEBI:190135"/>
    </ligand>
</feature>
<feature type="binding site" evidence="1">
    <location>
        <position position="446"/>
    </location>
    <ligand>
        <name>Mg(2+)</name>
        <dbReference type="ChEBI" id="CHEBI:18420"/>
    </ligand>
</feature>
<feature type="modified residue" description="N6-carboxylysine" evidence="1">
    <location>
        <position position="123"/>
    </location>
</feature>
<reference key="1">
    <citation type="journal article" date="2005" name="J. Bacteriol.">
        <title>Insights on evolution of virulence and resistance from the complete genome analysis of an early methicillin-resistant Staphylococcus aureus strain and a biofilm-producing methicillin-resistant Staphylococcus epidermidis strain.</title>
        <authorList>
            <person name="Gill S.R."/>
            <person name="Fouts D.E."/>
            <person name="Archer G.L."/>
            <person name="Mongodin E.F."/>
            <person name="DeBoy R.T."/>
            <person name="Ravel J."/>
            <person name="Paulsen I.T."/>
            <person name="Kolonay J.F."/>
            <person name="Brinkac L.M."/>
            <person name="Beanan M.J."/>
            <person name="Dodson R.J."/>
            <person name="Daugherty S.C."/>
            <person name="Madupu R."/>
            <person name="Angiuoli S.V."/>
            <person name="Durkin A.S."/>
            <person name="Haft D.H."/>
            <person name="Vamathevan J.J."/>
            <person name="Khouri H."/>
            <person name="Utterback T.R."/>
            <person name="Lee C."/>
            <person name="Dimitrov G."/>
            <person name="Jiang L."/>
            <person name="Qin H."/>
            <person name="Weidman J."/>
            <person name="Tran K."/>
            <person name="Kang K.H."/>
            <person name="Hance I.R."/>
            <person name="Nelson K.E."/>
            <person name="Fraser C.M."/>
        </authorList>
    </citation>
    <scope>NUCLEOTIDE SEQUENCE [LARGE SCALE GENOMIC DNA]</scope>
    <source>
        <strain>ATCC 35984 / DSM 28319 / BCRC 17069 / CCUG 31568 / BM 3577 / RP62A</strain>
    </source>
</reference>
<gene>
    <name evidence="1" type="primary">ilvD</name>
    <name type="ordered locus">SERP1665</name>
</gene>
<proteinExistence type="inferred from homology"/>
<accession>Q5HMG3</accession>
<sequence>MRSDMIKKGDHQAPARSLLHATGALKQPTDMNKPFVAICNSYIDIVPGHVHLRELADIAKEAIREAGAIPFEFNTIGVDDGIAMGHIGMRYSLPSREIIADAAETVINAHWFDGVFYIPNCDKITPGMLLAAVRTNVPAIFCSGGPMKAGLSAQGKALTLSSMFEAVGAFKEGTISKEAFLDMEQNACPTCGSCAGMFTANSMNCLMEVLGLALPYNGTALAVSDQRREMIRQAAFRLVENIKNDIKPRDIITQDAIDDAFALDMAMGGSTNTVLHTLAIANEAGIDYDLERINEIAKKTPYLSKIAPSSSYSMHDVHEAGGVPAIINELMKKDGTLHPDRLTVTGKTLRENNEGKNIKNFDVIHPLENPYDKQGGLSVLFGNLAPKGAVIKVGGVDPSIKVFTGKAICFNSHDEAVEAIDNHTVREGHVVVIRYEGPKGGPGMPEMLAPTSSIVGRGLGKDVALITDGRFSGATRGIAVGHISPEAASGGPIGLIRDGDKITIDLINRTLNVNQSEEELYRRKNQLEPFRAKVKTGYLARYTSLVTSANTGGIMQVPENLI</sequence>
<keyword id="KW-0001">2Fe-2S</keyword>
<keyword id="KW-0028">Amino-acid biosynthesis</keyword>
<keyword id="KW-0100">Branched-chain amino acid biosynthesis</keyword>
<keyword id="KW-0408">Iron</keyword>
<keyword id="KW-0411">Iron-sulfur</keyword>
<keyword id="KW-0456">Lyase</keyword>
<keyword id="KW-0460">Magnesium</keyword>
<keyword id="KW-0479">Metal-binding</keyword>
<keyword id="KW-1185">Reference proteome</keyword>
<dbReference type="EC" id="4.2.1.9" evidence="1"/>
<dbReference type="EMBL" id="CP000029">
    <property type="protein sequence ID" value="AAW55003.1"/>
    <property type="molecule type" value="Genomic_DNA"/>
</dbReference>
<dbReference type="RefSeq" id="WP_001830016.1">
    <property type="nucleotide sequence ID" value="NC_002976.3"/>
</dbReference>
<dbReference type="SMR" id="Q5HMG3"/>
<dbReference type="STRING" id="176279.SERP1665"/>
<dbReference type="GeneID" id="50018247"/>
<dbReference type="KEGG" id="ser:SERP1665"/>
<dbReference type="eggNOG" id="COG0129">
    <property type="taxonomic scope" value="Bacteria"/>
</dbReference>
<dbReference type="HOGENOM" id="CLU_014271_4_2_9"/>
<dbReference type="UniPathway" id="UPA00047">
    <property type="reaction ID" value="UER00057"/>
</dbReference>
<dbReference type="UniPathway" id="UPA00049">
    <property type="reaction ID" value="UER00061"/>
</dbReference>
<dbReference type="Proteomes" id="UP000000531">
    <property type="component" value="Chromosome"/>
</dbReference>
<dbReference type="GO" id="GO:0005829">
    <property type="term" value="C:cytosol"/>
    <property type="evidence" value="ECO:0007669"/>
    <property type="project" value="TreeGrafter"/>
</dbReference>
<dbReference type="GO" id="GO:0051537">
    <property type="term" value="F:2 iron, 2 sulfur cluster binding"/>
    <property type="evidence" value="ECO:0007669"/>
    <property type="project" value="UniProtKB-UniRule"/>
</dbReference>
<dbReference type="GO" id="GO:0004160">
    <property type="term" value="F:dihydroxy-acid dehydratase activity"/>
    <property type="evidence" value="ECO:0007669"/>
    <property type="project" value="UniProtKB-UniRule"/>
</dbReference>
<dbReference type="GO" id="GO:0000287">
    <property type="term" value="F:magnesium ion binding"/>
    <property type="evidence" value="ECO:0007669"/>
    <property type="project" value="UniProtKB-UniRule"/>
</dbReference>
<dbReference type="GO" id="GO:0009097">
    <property type="term" value="P:isoleucine biosynthetic process"/>
    <property type="evidence" value="ECO:0007669"/>
    <property type="project" value="UniProtKB-UniRule"/>
</dbReference>
<dbReference type="GO" id="GO:0009099">
    <property type="term" value="P:L-valine biosynthetic process"/>
    <property type="evidence" value="ECO:0007669"/>
    <property type="project" value="UniProtKB-UniRule"/>
</dbReference>
<dbReference type="FunFam" id="3.50.30.80:FF:000001">
    <property type="entry name" value="Dihydroxy-acid dehydratase"/>
    <property type="match status" value="1"/>
</dbReference>
<dbReference type="Gene3D" id="3.50.30.80">
    <property type="entry name" value="IlvD/EDD C-terminal domain-like"/>
    <property type="match status" value="1"/>
</dbReference>
<dbReference type="HAMAP" id="MF_00012">
    <property type="entry name" value="IlvD"/>
    <property type="match status" value="1"/>
</dbReference>
<dbReference type="InterPro" id="IPR042096">
    <property type="entry name" value="Dihydro-acid_dehy_C"/>
</dbReference>
<dbReference type="InterPro" id="IPR004404">
    <property type="entry name" value="DihydroxyA_deHydtase"/>
</dbReference>
<dbReference type="InterPro" id="IPR020558">
    <property type="entry name" value="DiOHA_6PGluconate_deHydtase_CS"/>
</dbReference>
<dbReference type="InterPro" id="IPR056740">
    <property type="entry name" value="ILV_EDD_C"/>
</dbReference>
<dbReference type="InterPro" id="IPR000581">
    <property type="entry name" value="ILV_EDD_N"/>
</dbReference>
<dbReference type="InterPro" id="IPR037237">
    <property type="entry name" value="IlvD/EDD_N"/>
</dbReference>
<dbReference type="NCBIfam" id="TIGR00110">
    <property type="entry name" value="ilvD"/>
    <property type="match status" value="1"/>
</dbReference>
<dbReference type="NCBIfam" id="NF002068">
    <property type="entry name" value="PRK00911.1"/>
    <property type="match status" value="1"/>
</dbReference>
<dbReference type="PANTHER" id="PTHR43661">
    <property type="entry name" value="D-XYLONATE DEHYDRATASE"/>
    <property type="match status" value="1"/>
</dbReference>
<dbReference type="PANTHER" id="PTHR43661:SF3">
    <property type="entry name" value="D-XYLONATE DEHYDRATASE YAGF-RELATED"/>
    <property type="match status" value="1"/>
</dbReference>
<dbReference type="Pfam" id="PF24877">
    <property type="entry name" value="ILV_EDD_C"/>
    <property type="match status" value="1"/>
</dbReference>
<dbReference type="Pfam" id="PF00920">
    <property type="entry name" value="ILVD_EDD_N"/>
    <property type="match status" value="1"/>
</dbReference>
<dbReference type="SUPFAM" id="SSF143975">
    <property type="entry name" value="IlvD/EDD N-terminal domain-like"/>
    <property type="match status" value="1"/>
</dbReference>
<dbReference type="SUPFAM" id="SSF52016">
    <property type="entry name" value="LeuD/IlvD-like"/>
    <property type="match status" value="1"/>
</dbReference>
<dbReference type="PROSITE" id="PS00886">
    <property type="entry name" value="ILVD_EDD_1"/>
    <property type="match status" value="1"/>
</dbReference>
<dbReference type="PROSITE" id="PS00887">
    <property type="entry name" value="ILVD_EDD_2"/>
    <property type="match status" value="1"/>
</dbReference>
<organism>
    <name type="scientific">Staphylococcus epidermidis (strain ATCC 35984 / DSM 28319 / BCRC 17069 / CCUG 31568 / BM 3577 / RP62A)</name>
    <dbReference type="NCBI Taxonomy" id="176279"/>
    <lineage>
        <taxon>Bacteria</taxon>
        <taxon>Bacillati</taxon>
        <taxon>Bacillota</taxon>
        <taxon>Bacilli</taxon>
        <taxon>Bacillales</taxon>
        <taxon>Staphylococcaceae</taxon>
        <taxon>Staphylococcus</taxon>
    </lineage>
</organism>